<reference key="1">
    <citation type="journal article" date="1996" name="Appl. Microbiol. Biotechnol.">
        <title>Cloning, sequencing and overexpression in Escherichia coli of a xylanase gene, xynA from the thermophilic bacterium Rt8B.4 genus Caldicellulosiruptor.</title>
        <authorList>
            <person name="Dwivedi P.P."/>
            <person name="Gibbs M.D."/>
            <person name="Saul D.J."/>
            <person name="Bergquist P.L."/>
        </authorList>
    </citation>
    <scope>NUCLEOTIDE SEQUENCE [GENOMIC DNA]</scope>
</reference>
<protein>
    <recommendedName>
        <fullName>Uncharacterized protein in xynA 3'region</fullName>
    </recommendedName>
    <alternativeName>
        <fullName>ORF6</fullName>
    </alternativeName>
</protein>
<evidence type="ECO:0000305" key="1"/>
<accession>P40983</accession>
<dbReference type="EMBL" id="L18965">
    <property type="protein sequence ID" value="AAB42046.1"/>
    <property type="molecule type" value="Genomic_DNA"/>
</dbReference>
<dbReference type="PIR" id="S41790">
    <property type="entry name" value="S41790"/>
</dbReference>
<dbReference type="SMR" id="P40983"/>
<dbReference type="CDD" id="cd09912">
    <property type="entry name" value="DLP_2"/>
    <property type="match status" value="1"/>
</dbReference>
<dbReference type="Gene3D" id="3.40.50.300">
    <property type="entry name" value="P-loop containing nucleotide triphosphate hydrolases"/>
    <property type="match status" value="1"/>
</dbReference>
<dbReference type="InterPro" id="IPR045063">
    <property type="entry name" value="Dynamin_N"/>
</dbReference>
<dbReference type="InterPro" id="IPR027417">
    <property type="entry name" value="P-loop_NTPase"/>
</dbReference>
<dbReference type="InterPro" id="IPR051943">
    <property type="entry name" value="TRAFAC_Dynamin-like_GTPase"/>
</dbReference>
<dbReference type="PANTHER" id="PTHR43681:SF1">
    <property type="entry name" value="SARCALUMENIN"/>
    <property type="match status" value="1"/>
</dbReference>
<dbReference type="PANTHER" id="PTHR43681">
    <property type="entry name" value="TRANSMEMBRANE GTPASE FZO"/>
    <property type="match status" value="1"/>
</dbReference>
<dbReference type="Pfam" id="PF00350">
    <property type="entry name" value="Dynamin_N"/>
    <property type="match status" value="1"/>
</dbReference>
<dbReference type="SUPFAM" id="SSF52540">
    <property type="entry name" value="P-loop containing nucleoside triphosphate hydrolases"/>
    <property type="match status" value="1"/>
</dbReference>
<organism>
    <name type="scientific">Caldicellulosiruptor sp. (strain Rt8B.4)</name>
    <dbReference type="NCBI Taxonomy" id="28238"/>
    <lineage>
        <taxon>Bacteria</taxon>
        <taxon>Bacillati</taxon>
        <taxon>Bacillota</taxon>
        <taxon>Bacillota incertae sedis</taxon>
        <taxon>Caldicellulosiruptorales</taxon>
        <taxon>Caldicellulosiruptoraceae</taxon>
        <taxon>Caldicellulosiruptor</taxon>
    </lineage>
</organism>
<name>YOR6_CALSR</name>
<sequence length="402" mass="46442">MRTIEYDVVQDMIRNFTEQLQEISNEINSESIKKLAGSIKEKIEKNAFYLVVLGQFKRGKSTLINYMLGANLLPTGVLPLTSVITKIYYSPEVKVDVIFESGVKKEIPVDELDLYCTERGNPKNQKCVDTIEIGYPFDFLNKDVVIVDTPGIGSVYQHNTDVTYEFIDKSDAVVFVLSVDPPITEVEKQFLLKIAENVDKIFFVINKSDLTSKNEIEEIVSFTTNVIKDITKKGNINIFPLSAKMALEGKISKNEEMIEKSCVEIFEKELKQFLKEEKGKIQILSNLKSLDGFLGVCEAFLENDMKLKIMPVKQLEENIEKFNEFLERVNQNKIEIYKLFKIEMNDILQSFDDEMEKIKKELVVKITKKINDYYPSVARLKRIEQKEHLNKYLEKAIVEEFD</sequence>
<feature type="chain" id="PRO_0000066377" description="Uncharacterized protein in xynA 3'region">
    <location>
        <begin position="1"/>
        <end position="402" status="greater than"/>
    </location>
</feature>
<feature type="non-terminal residue">
    <location>
        <position position="402"/>
    </location>
</feature>
<proteinExistence type="predicted"/>
<comment type="similarity">
    <text evidence="1">To M.genitalium MG148.</text>
</comment>